<sequence length="300" mass="32913">MNQSYGRLVSRAAIAATAMASLLLLIKIFAWWYTGSVSILAALVDSLVDIGASLTNLLVVRYSLQPADDNHSFGHGKAESLAALAQSMFISGSALFLFLTGIQHLVSPTPMTDPGVGVIVTIVALICTIILVSFQRWVVRRTQSQAVRADMLHYQSDVMMNGAILLALGLSWYGWHRADALFALGIGIYILYSALRMGYEAVQSLLDRALPDEERQEIIDIVTSWPGVSGAHDLRTRQSGPTRFIQIHLEMEDSLPLVQAHMVADQVEQAILRRFPGSDVIIHQDPCSVVPREGKRSMLS</sequence>
<comment type="function">
    <text evidence="1">Divalent metal cation transporter which exports Zn(2+), Cd(2+) and possibly Fe(2+). May be involved in zinc and iron detoxification by efflux.</text>
</comment>
<comment type="catalytic activity">
    <reaction evidence="1">
        <text>Zn(2+)(in) + H(+)(out) = Zn(2+)(out) + H(+)(in)</text>
        <dbReference type="Rhea" id="RHEA:28839"/>
        <dbReference type="ChEBI" id="CHEBI:15378"/>
        <dbReference type="ChEBI" id="CHEBI:29105"/>
    </reaction>
</comment>
<comment type="catalytic activity">
    <reaction evidence="1">
        <text>Cd(2+)(in) + H(+)(out) = Cd(2+)(out) + H(+)(in)</text>
        <dbReference type="Rhea" id="RHEA:28739"/>
        <dbReference type="ChEBI" id="CHEBI:15378"/>
        <dbReference type="ChEBI" id="CHEBI:48775"/>
    </reaction>
</comment>
<comment type="catalytic activity">
    <reaction evidence="1">
        <text>Fe(2+)(in) + H(+)(out) = Fe(2+)(out) + H(+)(in)</text>
        <dbReference type="Rhea" id="RHEA:29439"/>
        <dbReference type="ChEBI" id="CHEBI:15378"/>
        <dbReference type="ChEBI" id="CHEBI:29033"/>
    </reaction>
</comment>
<comment type="subunit">
    <text evidence="1">Homodimer.</text>
</comment>
<comment type="subcellular location">
    <subcellularLocation>
        <location evidence="1">Cell inner membrane</location>
        <topology evidence="1">Multi-pass membrane protein</topology>
    </subcellularLocation>
</comment>
<comment type="similarity">
    <text evidence="1">Belongs to the cation diffusion facilitator (CDF) transporter (TC 2.A.4) family. FieF subfamily.</text>
</comment>
<dbReference type="EMBL" id="CP000970">
    <property type="protein sequence ID" value="ACB16239.1"/>
    <property type="molecule type" value="Genomic_DNA"/>
</dbReference>
<dbReference type="RefSeq" id="WP_001076748.1">
    <property type="nucleotide sequence ID" value="NC_010498.1"/>
</dbReference>
<dbReference type="SMR" id="B1LNL8"/>
<dbReference type="GeneID" id="93777983"/>
<dbReference type="KEGG" id="ecm:EcSMS35_4355"/>
<dbReference type="HOGENOM" id="CLU_013430_3_0_6"/>
<dbReference type="Proteomes" id="UP000007011">
    <property type="component" value="Chromosome"/>
</dbReference>
<dbReference type="GO" id="GO:0005886">
    <property type="term" value="C:plasma membrane"/>
    <property type="evidence" value="ECO:0007669"/>
    <property type="project" value="UniProtKB-SubCell"/>
</dbReference>
<dbReference type="GO" id="GO:0015086">
    <property type="term" value="F:cadmium ion transmembrane transporter activity"/>
    <property type="evidence" value="ECO:0007669"/>
    <property type="project" value="UniProtKB-UniRule"/>
</dbReference>
<dbReference type="GO" id="GO:0015093">
    <property type="term" value="F:ferrous iron transmembrane transporter activity"/>
    <property type="evidence" value="ECO:0007669"/>
    <property type="project" value="TreeGrafter"/>
</dbReference>
<dbReference type="GO" id="GO:0046872">
    <property type="term" value="F:metal ion binding"/>
    <property type="evidence" value="ECO:0007669"/>
    <property type="project" value="UniProtKB-KW"/>
</dbReference>
<dbReference type="GO" id="GO:0015341">
    <property type="term" value="F:zinc efflux antiporter activity"/>
    <property type="evidence" value="ECO:0007669"/>
    <property type="project" value="TreeGrafter"/>
</dbReference>
<dbReference type="GO" id="GO:0006882">
    <property type="term" value="P:intracellular zinc ion homeostasis"/>
    <property type="evidence" value="ECO:0007669"/>
    <property type="project" value="TreeGrafter"/>
</dbReference>
<dbReference type="FunFam" id="1.20.1510.10:FF:000001">
    <property type="entry name" value="Ferrous-iron efflux pump FieF"/>
    <property type="match status" value="1"/>
</dbReference>
<dbReference type="FunFam" id="3.30.70.1350:FF:000002">
    <property type="entry name" value="Ferrous-iron efflux pump FieF"/>
    <property type="match status" value="1"/>
</dbReference>
<dbReference type="Gene3D" id="1.20.1510.10">
    <property type="entry name" value="Cation efflux protein transmembrane domain"/>
    <property type="match status" value="1"/>
</dbReference>
<dbReference type="Gene3D" id="3.30.70.1350">
    <property type="entry name" value="Cation efflux protein, cytoplasmic domain"/>
    <property type="match status" value="1"/>
</dbReference>
<dbReference type="HAMAP" id="MF_01425">
    <property type="entry name" value="Cation_efflux_FieF"/>
    <property type="match status" value="1"/>
</dbReference>
<dbReference type="InterPro" id="IPR002524">
    <property type="entry name" value="Cation_efflux"/>
</dbReference>
<dbReference type="InterPro" id="IPR027470">
    <property type="entry name" value="Cation_efflux_CTD"/>
</dbReference>
<dbReference type="InterPro" id="IPR036837">
    <property type="entry name" value="Cation_efflux_CTD_sf"/>
</dbReference>
<dbReference type="InterPro" id="IPR023783">
    <property type="entry name" value="Cation_efflux_FieF"/>
</dbReference>
<dbReference type="InterPro" id="IPR027469">
    <property type="entry name" value="Cation_efflux_TMD_sf"/>
</dbReference>
<dbReference type="InterPro" id="IPR050291">
    <property type="entry name" value="CDF_Transporter"/>
</dbReference>
<dbReference type="NCBIfam" id="TIGR01297">
    <property type="entry name" value="CDF"/>
    <property type="match status" value="1"/>
</dbReference>
<dbReference type="NCBIfam" id="NF007064">
    <property type="entry name" value="PRK09509.1"/>
    <property type="match status" value="1"/>
</dbReference>
<dbReference type="PANTHER" id="PTHR43840:SF41">
    <property type="entry name" value="CATION-EFFLUX PUMP FIEF"/>
    <property type="match status" value="1"/>
</dbReference>
<dbReference type="PANTHER" id="PTHR43840">
    <property type="entry name" value="MITOCHONDRIAL METAL TRANSPORTER 1-RELATED"/>
    <property type="match status" value="1"/>
</dbReference>
<dbReference type="Pfam" id="PF01545">
    <property type="entry name" value="Cation_efflux"/>
    <property type="match status" value="1"/>
</dbReference>
<dbReference type="Pfam" id="PF16916">
    <property type="entry name" value="ZT_dimer"/>
    <property type="match status" value="1"/>
</dbReference>
<dbReference type="SUPFAM" id="SSF160240">
    <property type="entry name" value="Cation efflux protein cytoplasmic domain-like"/>
    <property type="match status" value="1"/>
</dbReference>
<dbReference type="SUPFAM" id="SSF161111">
    <property type="entry name" value="Cation efflux protein transmembrane domain-like"/>
    <property type="match status" value="1"/>
</dbReference>
<reference key="1">
    <citation type="journal article" date="2008" name="J. Bacteriol.">
        <title>Insights into the environmental resistance gene pool from the genome sequence of the multidrug-resistant environmental isolate Escherichia coli SMS-3-5.</title>
        <authorList>
            <person name="Fricke W.F."/>
            <person name="Wright M.S."/>
            <person name="Lindell A.H."/>
            <person name="Harkins D.M."/>
            <person name="Baker-Austin C."/>
            <person name="Ravel J."/>
            <person name="Stepanauskas R."/>
        </authorList>
    </citation>
    <scope>NUCLEOTIDE SEQUENCE [LARGE SCALE GENOMIC DNA]</scope>
    <source>
        <strain>SMS-3-5 / SECEC</strain>
    </source>
</reference>
<accession>B1LNL8</accession>
<proteinExistence type="inferred from homology"/>
<evidence type="ECO:0000255" key="1">
    <source>
        <dbReference type="HAMAP-Rule" id="MF_01425"/>
    </source>
</evidence>
<protein>
    <recommendedName>
        <fullName evidence="1">Cation-efflux pump FieF</fullName>
    </recommendedName>
</protein>
<name>FIEF_ECOSM</name>
<organism>
    <name type="scientific">Escherichia coli (strain SMS-3-5 / SECEC)</name>
    <dbReference type="NCBI Taxonomy" id="439855"/>
    <lineage>
        <taxon>Bacteria</taxon>
        <taxon>Pseudomonadati</taxon>
        <taxon>Pseudomonadota</taxon>
        <taxon>Gammaproteobacteria</taxon>
        <taxon>Enterobacterales</taxon>
        <taxon>Enterobacteriaceae</taxon>
        <taxon>Escherichia</taxon>
    </lineage>
</organism>
<feature type="chain" id="PRO_1000145696" description="Cation-efflux pump FieF">
    <location>
        <begin position="1"/>
        <end position="300"/>
    </location>
</feature>
<feature type="transmembrane region" description="Helical" evidence="1">
    <location>
        <begin position="12"/>
        <end position="32"/>
    </location>
</feature>
<feature type="transmembrane region" description="Helical" evidence="1">
    <location>
        <begin position="39"/>
        <end position="59"/>
    </location>
</feature>
<feature type="transmembrane region" description="Helical" evidence="1">
    <location>
        <begin position="82"/>
        <end position="102"/>
    </location>
</feature>
<feature type="transmembrane region" description="Helical" evidence="1">
    <location>
        <begin position="114"/>
        <end position="134"/>
    </location>
</feature>
<feature type="transmembrane region" description="Helical" evidence="1">
    <location>
        <begin position="156"/>
        <end position="176"/>
    </location>
</feature>
<feature type="transmembrane region" description="Helical" evidence="1">
    <location>
        <begin position="178"/>
        <end position="198"/>
    </location>
</feature>
<feature type="binding site" evidence="1">
    <location>
        <position position="45"/>
    </location>
    <ligand>
        <name>Zn(2+)</name>
        <dbReference type="ChEBI" id="CHEBI:29105"/>
    </ligand>
</feature>
<feature type="binding site" evidence="1">
    <location>
        <position position="49"/>
    </location>
    <ligand>
        <name>Zn(2+)</name>
        <dbReference type="ChEBI" id="CHEBI:29105"/>
    </ligand>
</feature>
<feature type="binding site" evidence="1">
    <location>
        <position position="153"/>
    </location>
    <ligand>
        <name>Zn(2+)</name>
        <dbReference type="ChEBI" id="CHEBI:29105"/>
    </ligand>
</feature>
<feature type="binding site" evidence="1">
    <location>
        <position position="157"/>
    </location>
    <ligand>
        <name>Zn(2+)</name>
        <dbReference type="ChEBI" id="CHEBI:29105"/>
    </ligand>
</feature>
<gene>
    <name evidence="1" type="primary">fieF</name>
    <name type="ordered locus">EcSMS35_4355</name>
</gene>
<keyword id="KW-0997">Cell inner membrane</keyword>
<keyword id="KW-1003">Cell membrane</keyword>
<keyword id="KW-0406">Ion transport</keyword>
<keyword id="KW-0408">Iron</keyword>
<keyword id="KW-0410">Iron transport</keyword>
<keyword id="KW-0472">Membrane</keyword>
<keyword id="KW-0479">Metal-binding</keyword>
<keyword id="KW-0812">Transmembrane</keyword>
<keyword id="KW-1133">Transmembrane helix</keyword>
<keyword id="KW-0813">Transport</keyword>
<keyword id="KW-0862">Zinc</keyword>
<keyword id="KW-0864">Zinc transport</keyword>